<proteinExistence type="inferred from homology"/>
<sequence length="79" mass="8798">MSNKGQLLQGPFLNALRKEHVPVSIYLVNGIKLQGNIESFDQYVVLLRNTVTQMVYKHAISTVVPARAVNFRVDDAAEA</sequence>
<evidence type="ECO:0000255" key="1">
    <source>
        <dbReference type="HAMAP-Rule" id="MF_00436"/>
    </source>
</evidence>
<evidence type="ECO:0000255" key="2">
    <source>
        <dbReference type="PROSITE-ProRule" id="PRU01346"/>
    </source>
</evidence>
<keyword id="KW-1185">Reference proteome</keyword>
<keyword id="KW-0694">RNA-binding</keyword>
<keyword id="KW-0346">Stress response</keyword>
<organism>
    <name type="scientific">Cupriavidus necator (strain ATCC 17699 / DSM 428 / KCTC 22496 / NCIMB 10442 / H16 / Stanier 337)</name>
    <name type="common">Ralstonia eutropha</name>
    <dbReference type="NCBI Taxonomy" id="381666"/>
    <lineage>
        <taxon>Bacteria</taxon>
        <taxon>Pseudomonadati</taxon>
        <taxon>Pseudomonadota</taxon>
        <taxon>Betaproteobacteria</taxon>
        <taxon>Burkholderiales</taxon>
        <taxon>Burkholderiaceae</taxon>
        <taxon>Cupriavidus</taxon>
    </lineage>
</organism>
<reference key="1">
    <citation type="journal article" date="2006" name="Nat. Biotechnol.">
        <title>Genome sequence of the bioplastic-producing 'Knallgas' bacterium Ralstonia eutropha H16.</title>
        <authorList>
            <person name="Pohlmann A."/>
            <person name="Fricke W.F."/>
            <person name="Reinecke F."/>
            <person name="Kusian B."/>
            <person name="Liesegang H."/>
            <person name="Cramm R."/>
            <person name="Eitinger T."/>
            <person name="Ewering C."/>
            <person name="Poetter M."/>
            <person name="Schwartz E."/>
            <person name="Strittmatter A."/>
            <person name="Voss I."/>
            <person name="Gottschalk G."/>
            <person name="Steinbuechel A."/>
            <person name="Friedrich B."/>
            <person name="Bowien B."/>
        </authorList>
    </citation>
    <scope>NUCLEOTIDE SEQUENCE [LARGE SCALE GENOMIC DNA]</scope>
    <source>
        <strain>ATCC 17699 / DSM 428 / KCTC 22496 / NCIMB 10442 / H16 / Stanier 337</strain>
    </source>
</reference>
<comment type="function">
    <text evidence="1">RNA chaperone that binds small regulatory RNA (sRNAs) and mRNAs to facilitate mRNA translational regulation in response to envelope stress, environmental stress and changes in metabolite concentrations. Also binds with high specificity to tRNAs.</text>
</comment>
<comment type="subunit">
    <text evidence="1">Homohexamer.</text>
</comment>
<comment type="similarity">
    <text evidence="1">Belongs to the Hfq family.</text>
</comment>
<accession>Q0K967</accession>
<feature type="chain" id="PRO_1000025931" description="RNA-binding protein Hfq">
    <location>
        <begin position="1"/>
        <end position="79"/>
    </location>
</feature>
<feature type="domain" description="Sm" evidence="2">
    <location>
        <begin position="10"/>
        <end position="69"/>
    </location>
</feature>
<dbReference type="EMBL" id="AM260479">
    <property type="protein sequence ID" value="CAJ93454.1"/>
    <property type="molecule type" value="Genomic_DNA"/>
</dbReference>
<dbReference type="RefSeq" id="WP_011615623.1">
    <property type="nucleotide sequence ID" value="NC_008313.1"/>
</dbReference>
<dbReference type="SMR" id="Q0K967"/>
<dbReference type="STRING" id="381666.H16_A2359"/>
<dbReference type="KEGG" id="reh:H16_A2359"/>
<dbReference type="PATRIC" id="fig|381666.6.peg.2767"/>
<dbReference type="eggNOG" id="COG1923">
    <property type="taxonomic scope" value="Bacteria"/>
</dbReference>
<dbReference type="HOGENOM" id="CLU_113688_2_2_4"/>
<dbReference type="OrthoDB" id="9799751at2"/>
<dbReference type="Proteomes" id="UP000008210">
    <property type="component" value="Chromosome 1"/>
</dbReference>
<dbReference type="GO" id="GO:0005829">
    <property type="term" value="C:cytosol"/>
    <property type="evidence" value="ECO:0007669"/>
    <property type="project" value="TreeGrafter"/>
</dbReference>
<dbReference type="GO" id="GO:0003723">
    <property type="term" value="F:RNA binding"/>
    <property type="evidence" value="ECO:0007669"/>
    <property type="project" value="UniProtKB-UniRule"/>
</dbReference>
<dbReference type="GO" id="GO:0006355">
    <property type="term" value="P:regulation of DNA-templated transcription"/>
    <property type="evidence" value="ECO:0007669"/>
    <property type="project" value="InterPro"/>
</dbReference>
<dbReference type="GO" id="GO:0043487">
    <property type="term" value="P:regulation of RNA stability"/>
    <property type="evidence" value="ECO:0007669"/>
    <property type="project" value="TreeGrafter"/>
</dbReference>
<dbReference type="GO" id="GO:0045974">
    <property type="term" value="P:regulation of translation, ncRNA-mediated"/>
    <property type="evidence" value="ECO:0007669"/>
    <property type="project" value="TreeGrafter"/>
</dbReference>
<dbReference type="CDD" id="cd01716">
    <property type="entry name" value="Hfq"/>
    <property type="match status" value="1"/>
</dbReference>
<dbReference type="FunFam" id="2.30.30.100:FF:000001">
    <property type="entry name" value="RNA-binding protein Hfq"/>
    <property type="match status" value="1"/>
</dbReference>
<dbReference type="Gene3D" id="2.30.30.100">
    <property type="match status" value="1"/>
</dbReference>
<dbReference type="HAMAP" id="MF_00436">
    <property type="entry name" value="Hfq"/>
    <property type="match status" value="1"/>
</dbReference>
<dbReference type="InterPro" id="IPR005001">
    <property type="entry name" value="Hfq"/>
</dbReference>
<dbReference type="InterPro" id="IPR010920">
    <property type="entry name" value="LSM_dom_sf"/>
</dbReference>
<dbReference type="InterPro" id="IPR047575">
    <property type="entry name" value="Sm"/>
</dbReference>
<dbReference type="NCBIfam" id="TIGR02383">
    <property type="entry name" value="Hfq"/>
    <property type="match status" value="1"/>
</dbReference>
<dbReference type="NCBIfam" id="NF001602">
    <property type="entry name" value="PRK00395.1"/>
    <property type="match status" value="1"/>
</dbReference>
<dbReference type="PANTHER" id="PTHR34772">
    <property type="entry name" value="RNA-BINDING PROTEIN HFQ"/>
    <property type="match status" value="1"/>
</dbReference>
<dbReference type="PANTHER" id="PTHR34772:SF1">
    <property type="entry name" value="RNA-BINDING PROTEIN HFQ"/>
    <property type="match status" value="1"/>
</dbReference>
<dbReference type="Pfam" id="PF17209">
    <property type="entry name" value="Hfq"/>
    <property type="match status" value="1"/>
</dbReference>
<dbReference type="SUPFAM" id="SSF50182">
    <property type="entry name" value="Sm-like ribonucleoproteins"/>
    <property type="match status" value="1"/>
</dbReference>
<dbReference type="PROSITE" id="PS52002">
    <property type="entry name" value="SM"/>
    <property type="match status" value="1"/>
</dbReference>
<name>HFQ_CUPNH</name>
<gene>
    <name evidence="1" type="primary">hfq</name>
    <name type="ordered locus">H16_A2359</name>
</gene>
<protein>
    <recommendedName>
        <fullName evidence="1">RNA-binding protein Hfq</fullName>
    </recommendedName>
</protein>